<accession>Q8DSJ2</accession>
<feature type="chain" id="PRO_0000147188" description="tRNA(Met) cytidine acetate ligase">
    <location>
        <begin position="1"/>
        <end position="366"/>
    </location>
</feature>
<feature type="binding site" evidence="1">
    <location>
        <begin position="7"/>
        <end position="20"/>
    </location>
    <ligand>
        <name>ATP</name>
        <dbReference type="ChEBI" id="CHEBI:30616"/>
    </ligand>
</feature>
<feature type="binding site" evidence="1">
    <location>
        <position position="96"/>
    </location>
    <ligand>
        <name>ATP</name>
        <dbReference type="ChEBI" id="CHEBI:30616"/>
    </ligand>
</feature>
<feature type="binding site" evidence="1">
    <location>
        <position position="152"/>
    </location>
    <ligand>
        <name>ATP</name>
        <dbReference type="ChEBI" id="CHEBI:30616"/>
    </ligand>
</feature>
<feature type="binding site" evidence="1">
    <location>
        <position position="175"/>
    </location>
    <ligand>
        <name>ATP</name>
        <dbReference type="ChEBI" id="CHEBI:30616"/>
    </ligand>
</feature>
<proteinExistence type="inferred from homology"/>
<reference key="1">
    <citation type="journal article" date="2002" name="Proc. Natl. Acad. Sci. U.S.A.">
        <title>Genome sequence of Streptococcus mutans UA159, a cariogenic dental pathogen.</title>
        <authorList>
            <person name="Ajdic D.J."/>
            <person name="McShan W.M."/>
            <person name="McLaughlin R.E."/>
            <person name="Savic G."/>
            <person name="Chang J."/>
            <person name="Carson M.B."/>
            <person name="Primeaux C."/>
            <person name="Tian R."/>
            <person name="Kenton S."/>
            <person name="Jia H.G."/>
            <person name="Lin S.P."/>
            <person name="Qian Y."/>
            <person name="Li S."/>
            <person name="Zhu H."/>
            <person name="Najar F.Z."/>
            <person name="Lai H."/>
            <person name="White J."/>
            <person name="Roe B.A."/>
            <person name="Ferretti J.J."/>
        </authorList>
    </citation>
    <scope>NUCLEOTIDE SEQUENCE [LARGE SCALE GENOMIC DNA]</scope>
    <source>
        <strain>ATCC 700610 / UA159</strain>
    </source>
</reference>
<keyword id="KW-0067">ATP-binding</keyword>
<keyword id="KW-0963">Cytoplasm</keyword>
<keyword id="KW-0436">Ligase</keyword>
<keyword id="KW-0547">Nucleotide-binding</keyword>
<keyword id="KW-1185">Reference proteome</keyword>
<keyword id="KW-0694">RNA-binding</keyword>
<keyword id="KW-0819">tRNA processing</keyword>
<keyword id="KW-0820">tRNA-binding</keyword>
<dbReference type="EC" id="6.3.4.-" evidence="1"/>
<dbReference type="EMBL" id="AE014133">
    <property type="protein sequence ID" value="AAN59418.1"/>
    <property type="molecule type" value="Genomic_DNA"/>
</dbReference>
<dbReference type="RefSeq" id="NP_722112.1">
    <property type="nucleotide sequence ID" value="NC_004350.2"/>
</dbReference>
<dbReference type="RefSeq" id="WP_002263513.1">
    <property type="nucleotide sequence ID" value="NC_004350.2"/>
</dbReference>
<dbReference type="SMR" id="Q8DSJ2"/>
<dbReference type="STRING" id="210007.SMU_1791c"/>
<dbReference type="KEGG" id="smu:SMU_1791c"/>
<dbReference type="PATRIC" id="fig|210007.7.peg.1599"/>
<dbReference type="eggNOG" id="COG1323">
    <property type="taxonomic scope" value="Bacteria"/>
</dbReference>
<dbReference type="HOGENOM" id="CLU_038915_0_2_9"/>
<dbReference type="OrthoDB" id="9769796at2"/>
<dbReference type="PhylomeDB" id="Q8DSJ2"/>
<dbReference type="Proteomes" id="UP000002512">
    <property type="component" value="Chromosome"/>
</dbReference>
<dbReference type="GO" id="GO:0005737">
    <property type="term" value="C:cytoplasm"/>
    <property type="evidence" value="ECO:0007669"/>
    <property type="project" value="UniProtKB-SubCell"/>
</dbReference>
<dbReference type="GO" id="GO:0005524">
    <property type="term" value="F:ATP binding"/>
    <property type="evidence" value="ECO:0007669"/>
    <property type="project" value="UniProtKB-KW"/>
</dbReference>
<dbReference type="GO" id="GO:0016879">
    <property type="term" value="F:ligase activity, forming carbon-nitrogen bonds"/>
    <property type="evidence" value="ECO:0007669"/>
    <property type="project" value="UniProtKB-UniRule"/>
</dbReference>
<dbReference type="GO" id="GO:0000049">
    <property type="term" value="F:tRNA binding"/>
    <property type="evidence" value="ECO:0007669"/>
    <property type="project" value="UniProtKB-KW"/>
</dbReference>
<dbReference type="GO" id="GO:0006400">
    <property type="term" value="P:tRNA modification"/>
    <property type="evidence" value="ECO:0007669"/>
    <property type="project" value="UniProtKB-UniRule"/>
</dbReference>
<dbReference type="Gene3D" id="3.40.50.620">
    <property type="entry name" value="HUPs"/>
    <property type="match status" value="1"/>
</dbReference>
<dbReference type="HAMAP" id="MF_01539">
    <property type="entry name" value="TmcAL"/>
    <property type="match status" value="1"/>
</dbReference>
<dbReference type="InterPro" id="IPR014729">
    <property type="entry name" value="Rossmann-like_a/b/a_fold"/>
</dbReference>
<dbReference type="InterPro" id="IPR008513">
    <property type="entry name" value="tRNA(Met)_cyd_acetate_ligase"/>
</dbReference>
<dbReference type="NCBIfam" id="NF010191">
    <property type="entry name" value="PRK13670.1"/>
    <property type="match status" value="1"/>
</dbReference>
<dbReference type="PANTHER" id="PTHR37825">
    <property type="entry name" value="TRNA(MET) CYTIDINE ACETATE LIGASE"/>
    <property type="match status" value="1"/>
</dbReference>
<dbReference type="PANTHER" id="PTHR37825:SF1">
    <property type="entry name" value="TRNA(MET) CYTIDINE ACETATE LIGASE"/>
    <property type="match status" value="1"/>
</dbReference>
<dbReference type="Pfam" id="PF05636">
    <property type="entry name" value="HIGH_NTase1"/>
    <property type="match status" value="1"/>
</dbReference>
<dbReference type="SUPFAM" id="SSF52374">
    <property type="entry name" value="Nucleotidylyl transferase"/>
    <property type="match status" value="1"/>
</dbReference>
<comment type="function">
    <text evidence="1">Catalyzes the formation of N(4)-acetylcytidine (ac(4)C) at the wobble position of elongator tRNA(Met), using acetate and ATP as substrates. First activates an acetate ion to form acetyladenylate (Ac-AMP) and then transfers the acetyl group to tRNA to form ac(4)C34.</text>
</comment>
<comment type="catalytic activity">
    <reaction evidence="1">
        <text>cytidine(34) in elongator tRNA(Met) + acetate + ATP = N(4)-acetylcytidine(34) in elongator tRNA(Met) + AMP + diphosphate</text>
        <dbReference type="Rhea" id="RHEA:58144"/>
        <dbReference type="Rhea" id="RHEA-COMP:10693"/>
        <dbReference type="Rhea" id="RHEA-COMP:10694"/>
        <dbReference type="ChEBI" id="CHEBI:30089"/>
        <dbReference type="ChEBI" id="CHEBI:30616"/>
        <dbReference type="ChEBI" id="CHEBI:33019"/>
        <dbReference type="ChEBI" id="CHEBI:74900"/>
        <dbReference type="ChEBI" id="CHEBI:82748"/>
        <dbReference type="ChEBI" id="CHEBI:456215"/>
    </reaction>
</comment>
<comment type="subcellular location">
    <subcellularLocation>
        <location evidence="1">Cytoplasm</location>
    </subcellularLocation>
</comment>
<comment type="similarity">
    <text evidence="1">Belongs to the TmcAL family.</text>
</comment>
<sequence>MTTTGIIAEFNPFHNGHKYLLDQAHGLKIVAMSGNFVQRGEPAIIDKWTRAQMALENGADLVVELPFLVAVQSADYFASGAVDILAKLGIDTLAFGTETALDYNGLSTIYGKMAEQMSEFLTTLPEKLSYPQKTQLMWEKFAGVQFTGDTPNHILALAYAKACAGRNIRLRPIQRRGADYHSTEKTVAYASATSLRHHRQDPAFVAKSMPNANLFQTSPQVTWEDYFTLLQYQVLTQPDLTQLFQVNEELAIRIKKAIRQVTSFDQLVETVATKRYTKARVRRILIYILIGARETSLPQDVHILGFTAAGRTHLSHIKNKTRIISRIGSQPWDALTQQADQVYQLGNPKIAEQTWGRVPIRIDNTV</sequence>
<gene>
    <name evidence="1" type="primary">tmcAL</name>
    <name type="ordered locus">SMU_1791c</name>
</gene>
<evidence type="ECO:0000255" key="1">
    <source>
        <dbReference type="HAMAP-Rule" id="MF_01539"/>
    </source>
</evidence>
<organism>
    <name type="scientific">Streptococcus mutans serotype c (strain ATCC 700610 / UA159)</name>
    <dbReference type="NCBI Taxonomy" id="210007"/>
    <lineage>
        <taxon>Bacteria</taxon>
        <taxon>Bacillati</taxon>
        <taxon>Bacillota</taxon>
        <taxon>Bacilli</taxon>
        <taxon>Lactobacillales</taxon>
        <taxon>Streptococcaceae</taxon>
        <taxon>Streptococcus</taxon>
    </lineage>
</organism>
<name>TMCAL_STRMU</name>
<protein>
    <recommendedName>
        <fullName evidence="1">tRNA(Met) cytidine acetate ligase</fullName>
        <ecNumber evidence="1">6.3.4.-</ecNumber>
    </recommendedName>
</protein>